<reference key="1">
    <citation type="journal article" date="2000" name="Glycobiology">
        <title>Three bovine alpha2-fucosyltransferase genes encode enzymes that preferentially transfer fucose on Galbeta1-3GalNAc acceptor substrates.</title>
        <authorList>
            <person name="Barreaud J.P."/>
            <person name="Saunier K."/>
            <person name="Souchaire J."/>
            <person name="Delourme D."/>
            <person name="Oulmouden A."/>
            <person name="Oriol R."/>
            <person name="Leveziel H."/>
            <person name="Julien R."/>
            <person name="Petit J.M."/>
        </authorList>
    </citation>
    <scope>NUCLEOTIDE SEQUENCE [GENOMIC DNA]</scope>
    <scope>CATALYTIC ACTIVITY</scope>
    <scope>FUNCTION</scope>
    <scope>TISSUE SPECIFICITY</scope>
    <scope>BIOPHYSICOCHEMICAL PROPERTIES</scope>
</reference>
<reference key="2">
    <citation type="journal article" date="2001" name="Mol. Biol. Evol.">
        <title>Organization of the bovine alpha 2-fucosyltransferase gene cluster suggests that the Sec1 gene might have been shaped through a nonautonomous L1-retrotransposition event within the same locus.</title>
        <authorList>
            <person name="Saunier K."/>
            <person name="Barreaud J.P."/>
            <person name="Eggen A."/>
            <person name="Oriol R."/>
            <person name="Leveziel H."/>
            <person name="Julien R."/>
            <person name="Petit J.-M."/>
        </authorList>
    </citation>
    <scope>NUCLEOTIDE SEQUENCE [MRNA]</scope>
</reference>
<reference key="3">
    <citation type="submission" date="2018-03" db="EMBL/GenBank/DDBJ databases">
        <title>ARS-UCD1.2.</title>
        <authorList>
            <person name="Rosen B.D."/>
            <person name="Bickhart D.M."/>
            <person name="Koren S."/>
            <person name="Schnabel R.D."/>
            <person name="Hall R."/>
            <person name="Zimin A."/>
            <person name="Dreischer C."/>
            <person name="Schultheiss S."/>
            <person name="Schroeder S.G."/>
            <person name="Elsik C.G."/>
            <person name="Couldrey C."/>
            <person name="Liu G.E."/>
            <person name="Van Tassell C.P."/>
            <person name="Phillippy A.M."/>
            <person name="Smith T.P.L."/>
            <person name="Medrano J.F."/>
        </authorList>
    </citation>
    <scope>NUCLEOTIDE SEQUENCE [LARGE SCALE GENOMIC DNA]</scope>
    <source>
        <strain>Hereford</strain>
    </source>
</reference>
<organism>
    <name type="scientific">Bos taurus</name>
    <name type="common">Bovine</name>
    <dbReference type="NCBI Taxonomy" id="9913"/>
    <lineage>
        <taxon>Eukaryota</taxon>
        <taxon>Metazoa</taxon>
        <taxon>Chordata</taxon>
        <taxon>Craniata</taxon>
        <taxon>Vertebrata</taxon>
        <taxon>Euteleostomi</taxon>
        <taxon>Mammalia</taxon>
        <taxon>Eutheria</taxon>
        <taxon>Laurasiatheria</taxon>
        <taxon>Artiodactyla</taxon>
        <taxon>Ruminantia</taxon>
        <taxon>Pecora</taxon>
        <taxon>Bovidae</taxon>
        <taxon>Bovinae</taxon>
        <taxon>Bos</taxon>
    </lineage>
</organism>
<name>FUT1_BOVIN</name>
<keyword id="KW-0325">Glycoprotein</keyword>
<keyword id="KW-0328">Glycosyltransferase</keyword>
<keyword id="KW-0333">Golgi apparatus</keyword>
<keyword id="KW-0443">Lipid metabolism</keyword>
<keyword id="KW-0472">Membrane</keyword>
<keyword id="KW-1185">Reference proteome</keyword>
<keyword id="KW-0735">Signal-anchor</keyword>
<keyword id="KW-0808">Transferase</keyword>
<keyword id="KW-0812">Transmembrane</keyword>
<keyword id="KW-1133">Transmembrane helix</keyword>
<sequence>MWAPGHHHLCLIFLLTCVFACVFFLLIHQNLFHSGLDLFLPCPDRSRVRSPVAILCLSGTLMNPNATFTCPRHSASVSGTWTIDPKGRFGNQMGQYATLLALAQLNGRQAFIQPSMHAVLAPVFRITLPVLAPEVDRHAPWQELELHDWMSEEYAHLKEPWLKLTGFPCSWTFFHHLRDQIRSEFTLHEHLRQEAQRSLSGLRFPRTGGRPSTFVGVHVRRGDYLQVMPLHWKGVVGDRAYLQQAMDWFRARHKAPIFVVTSNGMKWCRENIDTSRGDVIFAGDGQEGAPNKDFALLTQCNHTIMTIGTFGFWAAYLAGGDTIYLANFTLPDSSFLKIFKPEAAFLPEWVGINADLSPLQ</sequence>
<gene>
    <name evidence="2" type="primary">FUT1</name>
</gene>
<protein>
    <recommendedName>
        <fullName evidence="2">Galactoside alpha-(1,2)-fucosyltransferase 1</fullName>
    </recommendedName>
    <alternativeName>
        <fullName>Alpha(1,2)FT 1</fullName>
    </alternativeName>
    <alternativeName>
        <fullName>Blood group H alpha 2-fucosyltransferase</fullName>
    </alternativeName>
    <alternativeName>
        <fullName>Fucosyltransferase 1</fullName>
    </alternativeName>
    <alternativeName>
        <fullName>GDP-L-fucose:beta-D-galactoside 2-alpha-L-fucosyltransferase 1</fullName>
    </alternativeName>
    <alternativeName>
        <fullName evidence="1">Type 1 galactoside alpha-(1,2)-fucosyltransferase FUT1</fullName>
        <ecNumber evidence="1">2.4.1.69</ecNumber>
    </alternativeName>
    <alternativeName>
        <fullName evidence="2">Type 2 galactoside alpha-(1,2)-fucosyltransferase FUT1</fullName>
        <ecNumber evidence="2">2.4.1.344</ecNumber>
    </alternativeName>
</protein>
<accession>F6Q1T7</accession>
<accession>Q9TTY7</accession>
<dbReference type="EC" id="2.4.1.69" evidence="1"/>
<dbReference type="EC" id="2.4.1.344" evidence="2"/>
<dbReference type="EMBL" id="AF186465">
    <property type="protein sequence ID" value="AAF07933.1"/>
    <property type="molecule type" value="Genomic_DNA"/>
</dbReference>
<dbReference type="EMBL" id="AH011099">
    <property type="protein sequence ID" value="AAL06321.1"/>
    <property type="molecule type" value="mRNA"/>
</dbReference>
<dbReference type="EMBL" id="DAAA02047467">
    <property type="status" value="NOT_ANNOTATED_CDS"/>
    <property type="molecule type" value="Genomic_DNA"/>
</dbReference>
<dbReference type="RefSeq" id="NP_803465.3">
    <property type="nucleotide sequence ID" value="NM_177499.4"/>
</dbReference>
<dbReference type="FunCoup" id="F6Q1T7">
    <property type="interactions" value="2"/>
</dbReference>
<dbReference type="SwissLipids" id="SLP:000001421"/>
<dbReference type="CAZy" id="GT11">
    <property type="family name" value="Glycosyltransferase Family 11"/>
</dbReference>
<dbReference type="GlyCosmos" id="F6Q1T7">
    <property type="glycosylation" value="3 sites, No reported glycans"/>
</dbReference>
<dbReference type="GlyGen" id="F6Q1T7">
    <property type="glycosylation" value="3 sites"/>
</dbReference>
<dbReference type="Ensembl" id="ENSBTAT00000023560.5">
    <property type="protein sequence ID" value="ENSBTAP00000023560.5"/>
    <property type="gene ID" value="ENSBTAG00000023374.6"/>
</dbReference>
<dbReference type="Ensembl" id="ENSBTAT00000088854.1">
    <property type="protein sequence ID" value="ENSBTAP00000097294.1"/>
    <property type="gene ID" value="ENSBTAG00000023374.6"/>
</dbReference>
<dbReference type="Ensembl" id="ENSBTAT00000097605.1">
    <property type="protein sequence ID" value="ENSBTAP00000090784.1"/>
    <property type="gene ID" value="ENSBTAG00000023374.6"/>
</dbReference>
<dbReference type="Ensembl" id="ENSBTAT00000107684.1">
    <property type="protein sequence ID" value="ENSBTAP00000089586.1"/>
    <property type="gene ID" value="ENSBTAG00000023374.6"/>
</dbReference>
<dbReference type="GeneID" id="281174"/>
<dbReference type="VEuPathDB" id="HostDB:ENSBTAG00000023374"/>
<dbReference type="VGNC" id="VGNC:49145">
    <property type="gene designation" value="FUT1"/>
</dbReference>
<dbReference type="GeneTree" id="ENSGT00390000001450"/>
<dbReference type="InParanoid" id="F6Q1T7"/>
<dbReference type="OrthoDB" id="3226at2759"/>
<dbReference type="Reactome" id="R-BTA-9033807">
    <property type="pathway name" value="ABO blood group biosynthesis"/>
</dbReference>
<dbReference type="Reactome" id="R-BTA-9840309">
    <property type="pathway name" value="Glycosphingolipid biosynthesis"/>
</dbReference>
<dbReference type="UniPathway" id="UPA00378"/>
<dbReference type="Proteomes" id="UP000009136">
    <property type="component" value="Chromosome 18"/>
</dbReference>
<dbReference type="Bgee" id="ENSBTAG00000023374">
    <property type="expression patterns" value="Expressed in urinary bladder and 90 other cell types or tissues"/>
</dbReference>
<dbReference type="GO" id="GO:0032580">
    <property type="term" value="C:Golgi cisterna membrane"/>
    <property type="evidence" value="ECO:0007669"/>
    <property type="project" value="UniProtKB-SubCell"/>
</dbReference>
<dbReference type="GO" id="GO:0031127">
    <property type="term" value="F:alpha-(1,2)-fucosyltransferase activity"/>
    <property type="evidence" value="ECO:0000314"/>
    <property type="project" value="UniProtKB"/>
</dbReference>
<dbReference type="GO" id="GO:0008107">
    <property type="term" value="F:galactoside 2-alpha-L-fucosyltransferase activity"/>
    <property type="evidence" value="ECO:0000318"/>
    <property type="project" value="GO_Central"/>
</dbReference>
<dbReference type="GO" id="GO:0005975">
    <property type="term" value="P:carbohydrate metabolic process"/>
    <property type="evidence" value="ECO:0007669"/>
    <property type="project" value="InterPro"/>
</dbReference>
<dbReference type="GO" id="GO:0036065">
    <property type="term" value="P:fucosylation"/>
    <property type="evidence" value="ECO:0000314"/>
    <property type="project" value="UniProtKB"/>
</dbReference>
<dbReference type="GO" id="GO:0006629">
    <property type="term" value="P:lipid metabolic process"/>
    <property type="evidence" value="ECO:0007669"/>
    <property type="project" value="UniProtKB-KW"/>
</dbReference>
<dbReference type="GO" id="GO:0021772">
    <property type="term" value="P:olfactory bulb development"/>
    <property type="evidence" value="ECO:0000250"/>
    <property type="project" value="UniProtKB"/>
</dbReference>
<dbReference type="GO" id="GO:0001954">
    <property type="term" value="P:positive regulation of cell-matrix adhesion"/>
    <property type="evidence" value="ECO:0000250"/>
    <property type="project" value="UniProtKB"/>
</dbReference>
<dbReference type="GO" id="GO:0010595">
    <property type="term" value="P:positive regulation of endothelial cell migration"/>
    <property type="evidence" value="ECO:0000250"/>
    <property type="project" value="UniProtKB"/>
</dbReference>
<dbReference type="GO" id="GO:1904906">
    <property type="term" value="P:positive regulation of endothelial cell-matrix adhesion via fibronectin"/>
    <property type="evidence" value="ECO:0000250"/>
    <property type="project" value="UniProtKB"/>
</dbReference>
<dbReference type="GO" id="GO:1903672">
    <property type="term" value="P:positive regulation of sprouting angiogenesis"/>
    <property type="evidence" value="ECO:0000250"/>
    <property type="project" value="UniProtKB"/>
</dbReference>
<dbReference type="GO" id="GO:0006486">
    <property type="term" value="P:protein glycosylation"/>
    <property type="evidence" value="ECO:0000318"/>
    <property type="project" value="GO_Central"/>
</dbReference>
<dbReference type="CDD" id="cd11301">
    <property type="entry name" value="Fut1_Fut2_like"/>
    <property type="match status" value="1"/>
</dbReference>
<dbReference type="InterPro" id="IPR002516">
    <property type="entry name" value="Glyco_trans_11"/>
</dbReference>
<dbReference type="PANTHER" id="PTHR11927">
    <property type="entry name" value="GALACTOSIDE 2-L-FUCOSYLTRANSFERASE"/>
    <property type="match status" value="1"/>
</dbReference>
<dbReference type="PANTHER" id="PTHR11927:SF4">
    <property type="entry name" value="GALACTOSIDE ALPHA-(1,2)-FUCOSYLTRANSFERASE 1"/>
    <property type="match status" value="1"/>
</dbReference>
<dbReference type="Pfam" id="PF01531">
    <property type="entry name" value="Glyco_transf_11"/>
    <property type="match status" value="1"/>
</dbReference>
<evidence type="ECO:0000250" key="1">
    <source>
        <dbReference type="UniProtKB" id="O09160"/>
    </source>
</evidence>
<evidence type="ECO:0000250" key="2">
    <source>
        <dbReference type="UniProtKB" id="P19526"/>
    </source>
</evidence>
<evidence type="ECO:0000255" key="3"/>
<evidence type="ECO:0000269" key="4">
    <source>
    </source>
</evidence>
<evidence type="ECO:0000305" key="5"/>
<evidence type="ECO:0000305" key="6">
    <source>
    </source>
</evidence>
<feature type="chain" id="PRO_0000449792" description="Galactoside alpha-(1,2)-fucosyltransferase 1">
    <location>
        <begin position="1"/>
        <end position="360"/>
    </location>
</feature>
<feature type="topological domain" description="Cytoplasmic" evidence="5">
    <location>
        <begin position="1"/>
        <end position="8"/>
    </location>
</feature>
<feature type="transmembrane region" description="Helical; Signal-anchor for type II membrane protein" evidence="3">
    <location>
        <begin position="9"/>
        <end position="27"/>
    </location>
</feature>
<feature type="topological domain" description="Lumenal" evidence="5">
    <location>
        <begin position="28"/>
        <end position="360"/>
    </location>
</feature>
<feature type="glycosylation site" description="N-linked (GlcNAc...) asparagine" evidence="3">
    <location>
        <position position="65"/>
    </location>
</feature>
<feature type="glycosylation site" description="N-linked (GlcNAc...) asparagine" evidence="3">
    <location>
        <position position="301"/>
    </location>
</feature>
<feature type="glycosylation site" description="N-linked (GlcNAc...) asparagine" evidence="3">
    <location>
        <position position="327"/>
    </location>
</feature>
<feature type="sequence conflict" description="In Ref. 1; AAF07933 and 2; AAL06321." evidence="5" ref="1 2">
    <original>H</original>
    <variation>R</variation>
    <location>
        <position position="7"/>
    </location>
</feature>
<feature type="sequence conflict" description="In Ref. 1; AAF07933 and 2; AAL06321." evidence="5" ref="1 2">
    <original>L</original>
    <variation>V</variation>
    <location>
        <position position="100"/>
    </location>
</feature>
<comment type="function">
    <text evidence="1 4">Catalyzes the transfer of L-fucose, from a guanosine diphosphate-beta-L-fucose, to the terminal galactose residue of glycoconjugates through an alpha(1,2) linkage leading to H antigen synthesis that is an intermediate substrate in the synthesis of ABO blood group antigens (PubMed:10814703). H antigen is essential for maturation of the glomerular layer of the main olfactory bulb, in cell migration and early cell-cell contacts during tumor associated angiogenesis (By similarity). Preferentially fucosylates soluble lactose and to a lesser extent, fucosylates glycolipids gangliosides GA1 and GM1a (PubMed:10814703).</text>
</comment>
<comment type="catalytic activity">
    <reaction evidence="4">
        <text>a ganglioside GM1 + GDP-beta-L-fucose = a ganglioside Fuc-GM1 + GDP + H(+)</text>
        <dbReference type="Rhea" id="RHEA:48292"/>
        <dbReference type="ChEBI" id="CHEBI:15378"/>
        <dbReference type="ChEBI" id="CHEBI:57273"/>
        <dbReference type="ChEBI" id="CHEBI:58189"/>
        <dbReference type="ChEBI" id="CHEBI:82639"/>
        <dbReference type="ChEBI" id="CHEBI:90189"/>
    </reaction>
    <physiologicalReaction direction="left-to-right" evidence="6">
        <dbReference type="Rhea" id="RHEA:48293"/>
    </physiologicalReaction>
</comment>
<comment type="catalytic activity">
    <reaction evidence="2">
        <text>a beta-D-galactosyl-(1-&gt;4)-N-acetyl-beta-D-glucosaminyl derivative + GDP-beta-L-fucose = an alpha-L-Fuc-(1-&gt;2)-beta-D-Gal-(1-&gt;4)-beta-D-GlcNAc derivative + GDP + H(+)</text>
        <dbReference type="Rhea" id="RHEA:50668"/>
        <dbReference type="ChEBI" id="CHEBI:15378"/>
        <dbReference type="ChEBI" id="CHEBI:57273"/>
        <dbReference type="ChEBI" id="CHEBI:58189"/>
        <dbReference type="ChEBI" id="CHEBI:133507"/>
        <dbReference type="ChEBI" id="CHEBI:133510"/>
        <dbReference type="EC" id="2.4.1.344"/>
    </reaction>
</comment>
<comment type="catalytic activity">
    <reaction evidence="1">
        <text>a ganglioside GA1 + GDP-beta-L-fucose = a ganglioside Fuc-GA1 + GDP + H(+)</text>
        <dbReference type="Rhea" id="RHEA:48320"/>
        <dbReference type="ChEBI" id="CHEBI:15378"/>
        <dbReference type="ChEBI" id="CHEBI:57273"/>
        <dbReference type="ChEBI" id="CHEBI:58189"/>
        <dbReference type="ChEBI" id="CHEBI:88069"/>
        <dbReference type="ChEBI" id="CHEBI:90262"/>
    </reaction>
    <physiologicalReaction direction="left-to-right" evidence="1">
        <dbReference type="Rhea" id="RHEA:48321"/>
    </physiologicalReaction>
</comment>
<comment type="catalytic activity">
    <reaction evidence="1">
        <text>a beta-D-Gal-(1-&gt;3)-beta-D-GlcNAc-(1-&gt;3)-beta-D-Gal-(1-&gt;4)-beta-D-Glc-(1&lt;-&gt;1')-Cer(d18:1(4E)) + GDP-beta-L-fucose = alpha-L-fucosyl-(1-&gt;2)- beta-D-galactosyl-(1-&gt;3)-N-acetyl-beta-D-glucosaminyl-(1-&gt;3)-beta-D-galactosyl-(1-&gt;4)-beta-D-glucosyl-(1&lt;-&gt;1')-N-acylsphing-4-enine + GDP + H(+)</text>
        <dbReference type="Rhea" id="RHEA:32175"/>
        <dbReference type="ChEBI" id="CHEBI:15378"/>
        <dbReference type="ChEBI" id="CHEBI:17292"/>
        <dbReference type="ChEBI" id="CHEBI:28743"/>
        <dbReference type="ChEBI" id="CHEBI:57273"/>
        <dbReference type="ChEBI" id="CHEBI:58189"/>
        <dbReference type="EC" id="2.4.1.69"/>
    </reaction>
    <physiologicalReaction direction="left-to-right" evidence="1">
        <dbReference type="Rhea" id="RHEA:32176"/>
    </physiologicalReaction>
</comment>
<comment type="catalytic activity">
    <reaction evidence="1">
        <text>a neolactoside nLc4Cer(d18:1(4E)) + GDP-beta-L-fucose = a neolactoside IV(2)-alpha-Fuc-nLc4Cer(d18:1(4E)) + GDP + H(+)</text>
        <dbReference type="Rhea" id="RHEA:48304"/>
        <dbReference type="ChEBI" id="CHEBI:15378"/>
        <dbReference type="ChEBI" id="CHEBI:17006"/>
        <dbReference type="ChEBI" id="CHEBI:28691"/>
        <dbReference type="ChEBI" id="CHEBI:57273"/>
        <dbReference type="ChEBI" id="CHEBI:58189"/>
    </reaction>
    <physiologicalReaction direction="left-to-right" evidence="1">
        <dbReference type="Rhea" id="RHEA:48305"/>
    </physiologicalReaction>
</comment>
<comment type="catalytic activity">
    <reaction evidence="4">
        <text>beta-D-galactosyl-(1-&gt;3)-N-acetyl-D-galactosamine + GDP-beta-L-fucose = alpha-L-fucosyl-(1-&gt;2)-beta-D-galactosyl-(1-&gt;3)-N-acetyl-D-galactosamine + GDP + H(+)</text>
        <dbReference type="Rhea" id="RHEA:62964"/>
        <dbReference type="ChEBI" id="CHEBI:15378"/>
        <dbReference type="ChEBI" id="CHEBI:57273"/>
        <dbReference type="ChEBI" id="CHEBI:58189"/>
        <dbReference type="ChEBI" id="CHEBI:84728"/>
        <dbReference type="ChEBI" id="CHEBI:546807"/>
    </reaction>
    <physiologicalReaction direction="left-to-right" evidence="6">
        <dbReference type="Rhea" id="RHEA:62965"/>
    </physiologicalReaction>
</comment>
<comment type="biophysicochemical properties">
    <kinetics>
        <KM evidence="4">0.26 uM for Galacto-N-biose</KM>
        <KM evidence="4">1.29 uM for ganglioside GM1a</KM>
        <Vmax evidence="4">48.6 pmol/min/mg enzyme towards Galacto-N-biose</Vmax>
        <Vmax evidence="4">58.5 pmol/min/mg enzyme towards ganglioside GM1a</Vmax>
    </kinetics>
</comment>
<comment type="pathway">
    <text evidence="2">Protein modification; protein glycosylation.</text>
</comment>
<comment type="subcellular location">
    <subcellularLocation>
        <location evidence="1">Golgi apparatus</location>
        <location evidence="1">Golgi stack membrane</location>
        <topology evidence="1">Single-pass type II membrane protein</topology>
    </subcellularLocation>
    <text evidence="1">Membrane-bound form in trans cisternae of Golgi.</text>
</comment>
<comment type="tissue specificity">
    <text evidence="4">Expressed in brain, intestine and kidney.</text>
</comment>
<comment type="similarity">
    <text evidence="5">Belongs to the glycosyltransferase 11 family.</text>
</comment>
<proteinExistence type="evidence at protein level"/>